<name>KATG_PSEPF</name>
<protein>
    <recommendedName>
        <fullName evidence="1">Catalase-peroxidase</fullName>
        <shortName evidence="1">CP</shortName>
        <ecNumber evidence="1">1.11.1.21</ecNumber>
    </recommendedName>
    <alternativeName>
        <fullName evidence="1">Peroxidase/catalase</fullName>
    </alternativeName>
</protein>
<organism>
    <name type="scientific">Pseudomonas fluorescens (strain Pf0-1)</name>
    <dbReference type="NCBI Taxonomy" id="205922"/>
    <lineage>
        <taxon>Bacteria</taxon>
        <taxon>Pseudomonadati</taxon>
        <taxon>Pseudomonadota</taxon>
        <taxon>Gammaproteobacteria</taxon>
        <taxon>Pseudomonadales</taxon>
        <taxon>Pseudomonadaceae</taxon>
        <taxon>Pseudomonas</taxon>
    </lineage>
</organism>
<accession>Q3KE62</accession>
<dbReference type="EC" id="1.11.1.21" evidence="1"/>
<dbReference type="EMBL" id="CP000094">
    <property type="protein sequence ID" value="ABA73944.1"/>
    <property type="molecule type" value="Genomic_DNA"/>
</dbReference>
<dbReference type="RefSeq" id="WP_011333629.1">
    <property type="nucleotide sequence ID" value="NC_007492.2"/>
</dbReference>
<dbReference type="SMR" id="Q3KE62"/>
<dbReference type="PeroxiBase" id="2315">
    <property type="entry name" value="PfCP01_PfO1"/>
</dbReference>
<dbReference type="KEGG" id="pfo:Pfl01_2201"/>
<dbReference type="eggNOG" id="COG0376">
    <property type="taxonomic scope" value="Bacteria"/>
</dbReference>
<dbReference type="HOGENOM" id="CLU_025424_2_0_6"/>
<dbReference type="Proteomes" id="UP000002704">
    <property type="component" value="Chromosome"/>
</dbReference>
<dbReference type="GO" id="GO:0005829">
    <property type="term" value="C:cytosol"/>
    <property type="evidence" value="ECO:0007669"/>
    <property type="project" value="TreeGrafter"/>
</dbReference>
<dbReference type="GO" id="GO:0004096">
    <property type="term" value="F:catalase activity"/>
    <property type="evidence" value="ECO:0007669"/>
    <property type="project" value="UniProtKB-UniRule"/>
</dbReference>
<dbReference type="GO" id="GO:0020037">
    <property type="term" value="F:heme binding"/>
    <property type="evidence" value="ECO:0007669"/>
    <property type="project" value="InterPro"/>
</dbReference>
<dbReference type="GO" id="GO:0046872">
    <property type="term" value="F:metal ion binding"/>
    <property type="evidence" value="ECO:0007669"/>
    <property type="project" value="UniProtKB-KW"/>
</dbReference>
<dbReference type="GO" id="GO:0070301">
    <property type="term" value="P:cellular response to hydrogen peroxide"/>
    <property type="evidence" value="ECO:0007669"/>
    <property type="project" value="TreeGrafter"/>
</dbReference>
<dbReference type="GO" id="GO:0042744">
    <property type="term" value="P:hydrogen peroxide catabolic process"/>
    <property type="evidence" value="ECO:0007669"/>
    <property type="project" value="UniProtKB-KW"/>
</dbReference>
<dbReference type="CDD" id="cd00649">
    <property type="entry name" value="catalase_peroxidase_1"/>
    <property type="match status" value="1"/>
</dbReference>
<dbReference type="CDD" id="cd08200">
    <property type="entry name" value="catalase_peroxidase_2"/>
    <property type="match status" value="1"/>
</dbReference>
<dbReference type="FunFam" id="1.10.420.10:FF:000004">
    <property type="entry name" value="Catalase-peroxidase"/>
    <property type="match status" value="1"/>
</dbReference>
<dbReference type="FunFam" id="1.10.520.10:FF:000002">
    <property type="entry name" value="Catalase-peroxidase"/>
    <property type="match status" value="1"/>
</dbReference>
<dbReference type="Gene3D" id="1.10.520.10">
    <property type="match status" value="2"/>
</dbReference>
<dbReference type="Gene3D" id="1.10.420.10">
    <property type="entry name" value="Peroxidase, domain 2"/>
    <property type="match status" value="2"/>
</dbReference>
<dbReference type="HAMAP" id="MF_01961">
    <property type="entry name" value="Catal_peroxid"/>
    <property type="match status" value="1"/>
</dbReference>
<dbReference type="InterPro" id="IPR000763">
    <property type="entry name" value="Catalase_peroxidase"/>
</dbReference>
<dbReference type="InterPro" id="IPR002016">
    <property type="entry name" value="Haem_peroxidase"/>
</dbReference>
<dbReference type="InterPro" id="IPR010255">
    <property type="entry name" value="Haem_peroxidase_sf"/>
</dbReference>
<dbReference type="InterPro" id="IPR019794">
    <property type="entry name" value="Peroxidases_AS"/>
</dbReference>
<dbReference type="InterPro" id="IPR019793">
    <property type="entry name" value="Peroxidases_heam-ligand_BS"/>
</dbReference>
<dbReference type="NCBIfam" id="TIGR00198">
    <property type="entry name" value="cat_per_HPI"/>
    <property type="match status" value="1"/>
</dbReference>
<dbReference type="NCBIfam" id="NF011635">
    <property type="entry name" value="PRK15061.1"/>
    <property type="match status" value="1"/>
</dbReference>
<dbReference type="PANTHER" id="PTHR30555:SF0">
    <property type="entry name" value="CATALASE-PEROXIDASE"/>
    <property type="match status" value="1"/>
</dbReference>
<dbReference type="PANTHER" id="PTHR30555">
    <property type="entry name" value="HYDROPEROXIDASE I, BIFUNCTIONAL CATALASE-PEROXIDASE"/>
    <property type="match status" value="1"/>
</dbReference>
<dbReference type="Pfam" id="PF00141">
    <property type="entry name" value="peroxidase"/>
    <property type="match status" value="2"/>
</dbReference>
<dbReference type="PRINTS" id="PR00460">
    <property type="entry name" value="BPEROXIDASE"/>
</dbReference>
<dbReference type="PRINTS" id="PR00458">
    <property type="entry name" value="PEROXIDASE"/>
</dbReference>
<dbReference type="SUPFAM" id="SSF48113">
    <property type="entry name" value="Heme-dependent peroxidases"/>
    <property type="match status" value="2"/>
</dbReference>
<dbReference type="PROSITE" id="PS00435">
    <property type="entry name" value="PEROXIDASE_1"/>
    <property type="match status" value="1"/>
</dbReference>
<dbReference type="PROSITE" id="PS00436">
    <property type="entry name" value="PEROXIDASE_2"/>
    <property type="match status" value="1"/>
</dbReference>
<sequence length="755" mass="82734">MANESKCPFNHAAGGGTTNRDWWPNQLNLKILSQHSPASDPMGKDFDYAKAFKSLDFQALKRDLTALMTDSQEWWPADFGHYGPLFIRMAWHSAGTYRTADGRGGAGSGQQRFAPLNSWPDNVSLDKARRLLWPIKQKYGRNISWADLIVLTGNVALESMGFKTFGFSGGRADVWEPDEDVYWGSENKWLGGDNRYGKDPESMQPPGEGTLVAEPAEHGNEESRTNQGERNLENPLAAVQMGLIYVNPEGPEGNPDPVASAKDIRETFGRMAMNDEETVALIAGGHAFGKTHGAGPADNVGPEPEAAGLEEQGLGWKNSFGTGKGADTITSGLEVTWTTTPTKWSNNYLENLFGFEWELTKSPAGAHQWKPKNGAGAGTIPHAHDPNKRIDPTMLTSDLALRFDPTYEKISRRFLANPDQLADAFARAWYKLIHRDMGPLSRYLGPELPQEELLWQDPIPEATHPLVDDSDIRALKGKILASGLSVSELVSTAWAAASTFRGSDKRGGANGGRLRLAPQKFWQANQPEQLDKVLKVLEGIQNEFNAGAAGKQVSLADLIVLAGNAGVEQAAQNAGHTVTVPFNPGRTDATQEQTDVESFGFLEPHTDGFRNYAASTYRVPAEALLIDKAQLLTLSAPEMTVLIGGLRVLDTNVGKTQHGVFTDRPGTLTNDFFRNLLDMGVEWKPTSKTEFEGRDRKTGSVKWTATRVDLVFGSNSVLRALAEVYASSDAKEQFVTDFVAAWAKVMDLDRFDLRQ</sequence>
<evidence type="ECO:0000255" key="1">
    <source>
        <dbReference type="HAMAP-Rule" id="MF_01961"/>
    </source>
</evidence>
<evidence type="ECO:0000256" key="2">
    <source>
        <dbReference type="SAM" id="MobiDB-lite"/>
    </source>
</evidence>
<comment type="function">
    <text evidence="1">Bifunctional enzyme with both catalase and broad-spectrum peroxidase activity.</text>
</comment>
<comment type="catalytic activity">
    <reaction evidence="1">
        <text>H2O2 + AH2 = A + 2 H2O</text>
        <dbReference type="Rhea" id="RHEA:30275"/>
        <dbReference type="ChEBI" id="CHEBI:13193"/>
        <dbReference type="ChEBI" id="CHEBI:15377"/>
        <dbReference type="ChEBI" id="CHEBI:16240"/>
        <dbReference type="ChEBI" id="CHEBI:17499"/>
        <dbReference type="EC" id="1.11.1.21"/>
    </reaction>
</comment>
<comment type="catalytic activity">
    <reaction evidence="1">
        <text>2 H2O2 = O2 + 2 H2O</text>
        <dbReference type="Rhea" id="RHEA:20309"/>
        <dbReference type="ChEBI" id="CHEBI:15377"/>
        <dbReference type="ChEBI" id="CHEBI:15379"/>
        <dbReference type="ChEBI" id="CHEBI:16240"/>
        <dbReference type="EC" id="1.11.1.21"/>
    </reaction>
</comment>
<comment type="cofactor">
    <cofactor evidence="1">
        <name>heme b</name>
        <dbReference type="ChEBI" id="CHEBI:60344"/>
    </cofactor>
    <text evidence="1">Binds 1 heme b (iron(II)-protoporphyrin IX) group per dimer.</text>
</comment>
<comment type="subunit">
    <text evidence="1">Homodimer or homotetramer.</text>
</comment>
<comment type="PTM">
    <text evidence="1">Formation of the three residue Trp-Tyr-Met cross-link is important for the catalase, but not the peroxidase activity of the enzyme.</text>
</comment>
<comment type="similarity">
    <text evidence="1">Belongs to the peroxidase family. Peroxidase/catalase subfamily.</text>
</comment>
<reference key="1">
    <citation type="journal article" date="2009" name="Genome Biol.">
        <title>Genomic and genetic analyses of diversity and plant interactions of Pseudomonas fluorescens.</title>
        <authorList>
            <person name="Silby M.W."/>
            <person name="Cerdeno-Tarraga A.M."/>
            <person name="Vernikos G.S."/>
            <person name="Giddens S.R."/>
            <person name="Jackson R.W."/>
            <person name="Preston G.M."/>
            <person name="Zhang X.-X."/>
            <person name="Moon C.D."/>
            <person name="Gehrig S.M."/>
            <person name="Godfrey S.A.C."/>
            <person name="Knight C.G."/>
            <person name="Malone J.G."/>
            <person name="Robinson Z."/>
            <person name="Spiers A.J."/>
            <person name="Harris S."/>
            <person name="Challis G.L."/>
            <person name="Yaxley A.M."/>
            <person name="Harris D."/>
            <person name="Seeger K."/>
            <person name="Murphy L."/>
            <person name="Rutter S."/>
            <person name="Squares R."/>
            <person name="Quail M.A."/>
            <person name="Saunders E."/>
            <person name="Mavromatis K."/>
            <person name="Brettin T.S."/>
            <person name="Bentley S.D."/>
            <person name="Hothersall J."/>
            <person name="Stephens E."/>
            <person name="Thomas C.M."/>
            <person name="Parkhill J."/>
            <person name="Levy S.B."/>
            <person name="Rainey P.B."/>
            <person name="Thomson N.R."/>
        </authorList>
    </citation>
    <scope>NUCLEOTIDE SEQUENCE [LARGE SCALE GENOMIC DNA]</scope>
    <source>
        <strain>Pf0-1</strain>
    </source>
</reference>
<keyword id="KW-0349">Heme</keyword>
<keyword id="KW-0376">Hydrogen peroxide</keyword>
<keyword id="KW-0408">Iron</keyword>
<keyword id="KW-0479">Metal-binding</keyword>
<keyword id="KW-0560">Oxidoreductase</keyword>
<keyword id="KW-0575">Peroxidase</keyword>
<feature type="chain" id="PRO_0000354864" description="Catalase-peroxidase">
    <location>
        <begin position="1"/>
        <end position="755"/>
    </location>
</feature>
<feature type="region of interest" description="Disordered" evidence="2">
    <location>
        <begin position="193"/>
        <end position="229"/>
    </location>
</feature>
<feature type="compositionally biased region" description="Basic and acidic residues" evidence="2">
    <location>
        <begin position="215"/>
        <end position="224"/>
    </location>
</feature>
<feature type="active site" description="Proton acceptor" evidence="1">
    <location>
        <position position="92"/>
    </location>
</feature>
<feature type="binding site" description="axial binding residue" evidence="1">
    <location>
        <position position="286"/>
    </location>
    <ligand>
        <name>heme</name>
        <dbReference type="ChEBI" id="CHEBI:30413"/>
    </ligand>
    <ligandPart>
        <name>Fe</name>
        <dbReference type="ChEBI" id="CHEBI:18248"/>
    </ligandPart>
</feature>
<feature type="site" description="Transition state stabilizer" evidence="1">
    <location>
        <position position="88"/>
    </location>
</feature>
<feature type="cross-link" description="Tryptophyl-tyrosyl-methioninium (Trp-Tyr) (with M-271)" evidence="1">
    <location>
        <begin position="91"/>
        <end position="245"/>
    </location>
</feature>
<feature type="cross-link" description="Tryptophyl-tyrosyl-methioninium (Tyr-Met) (with W-91)" evidence="1">
    <location>
        <begin position="245"/>
        <end position="271"/>
    </location>
</feature>
<proteinExistence type="inferred from homology"/>
<gene>
    <name evidence="1" type="primary">katG</name>
    <name type="ordered locus">Pfl01_2201</name>
</gene>